<feature type="chain" id="PRO_0000460339" description="Gabija anti-defense 1">
    <location>
        <begin position="1"/>
        <end position="348"/>
    </location>
</feature>
<gene>
    <name evidence="3" type="primary">gad1</name>
</gene>
<gene>
    <name evidence="5" type="ORF">S14_10</name>
</gene>
<name>GAD1_BPSH1</name>
<organism>
    <name type="scientific">Shewanella phage 1/4</name>
    <dbReference type="NCBI Taxonomy" id="1458859"/>
    <lineage>
        <taxon>Viruses</taxon>
        <taxon>Duplodnaviria</taxon>
        <taxon>Heunggongvirae</taxon>
        <taxon>Uroviricota</taxon>
        <taxon>Caudoviricetes</taxon>
    </lineage>
</organism>
<comment type="function">
    <text evidence="2">Counteracts the host Gabija antiviral defense system by suppressing the ability of Gabija to cleave DNA.</text>
</comment>
<comment type="subunit">
    <text evidence="1">Binds the Gabija complex as an octamer and inhibits its ability to bind and cleave DNA.</text>
</comment>
<comment type="similarity">
    <text evidence="4">Belongs to the Caudoviricetes Gad1 anti-defense protein family.</text>
</comment>
<evidence type="ECO:0000250" key="1">
    <source>
        <dbReference type="UniProtKB" id="A0A1P8CWZ3"/>
    </source>
</evidence>
<evidence type="ECO:0000269" key="2">
    <source>
    </source>
</evidence>
<evidence type="ECO:0000303" key="3">
    <source>
    </source>
</evidence>
<evidence type="ECO:0000305" key="4"/>
<evidence type="ECO:0000312" key="5">
    <source>
        <dbReference type="EMBL" id="AHK11122.1"/>
    </source>
</evidence>
<sequence>MTTNKLSIVAYNTDKGLYYANNQRDYNKQRVSIYSGILVNGGQPVDSEHKSGWYFLKGEDKITSVKKNQSGGYGEASWKLLDDSTHIDGVIPKVLTPTEADEFEDDCEWYIGQGSKYYAYRGLYKRVQERLPNIEVDVEFEVDYKGHIEYALVENNYKDMKIRVSNGSSWTPKVMEQSLTSITHYYELEELLTPDIVLHNRPCYITQDTTYNIVRNYIKENINPKHARLTSDYDFCLTVKKVIHIKPFTKSTEITKSNGRSYAKPQFKTQTISTKEVEIFEMCPSKKYQNYTPIEGFKGNSLADLVENMKLYLDHLMGVINTPVEECTSCGGLGCTYNKIDDINIRGE</sequence>
<reference key="1">
    <citation type="journal article" date="2014" name="Environ. Microbiol.">
        <title>Cold-active bacteriophages from the Baltic Sea ice have diverse genomes and virus-host interactions.</title>
        <authorList>
            <person name="Sencilo A."/>
            <person name="Luhtanen A.M."/>
            <person name="Saarijarvi M."/>
            <person name="Bamford D.H."/>
            <person name="Roine E."/>
        </authorList>
    </citation>
    <scope>NUCLEOTIDE SEQUENCE [LARGE SCALE GENOMIC DNA]</scope>
</reference>
<reference key="2">
    <citation type="journal article" date="2024" name="Nature">
        <title>Phages overcome bacterial immunity via diverse anti-defence proteins.</title>
        <authorList>
            <person name="Yirmiya E."/>
            <person name="Leavitt A."/>
            <person name="Lu A."/>
            <person name="Ragucci A.E."/>
            <person name="Avraham C."/>
            <person name="Osterman I."/>
            <person name="Garb J."/>
            <person name="Antine S.P."/>
            <person name="Mooney S.E."/>
            <person name="Hobbs S.J."/>
            <person name="Kranzusch P.J."/>
            <person name="Amitai G."/>
            <person name="Sorek R."/>
        </authorList>
    </citation>
    <scope>FUNCTION</scope>
</reference>
<proteinExistence type="inferred from homology"/>
<protein>
    <recommendedName>
        <fullName evidence="3">Gabija anti-defense 1</fullName>
        <shortName evidence="3">Gad1</shortName>
    </recommendedName>
</protein>
<dbReference type="EMBL" id="KJ018209">
    <property type="protein sequence ID" value="AHK11122.1"/>
    <property type="molecule type" value="Genomic_DNA"/>
</dbReference>
<dbReference type="RefSeq" id="YP_009100317.1">
    <property type="nucleotide sequence ID" value="NC_025436.1"/>
</dbReference>
<dbReference type="SMR" id="A0A088C4D9"/>
<dbReference type="GeneID" id="22110397"/>
<dbReference type="KEGG" id="vg:22110397"/>
<dbReference type="Proteomes" id="UP000029368">
    <property type="component" value="Genome"/>
</dbReference>
<dbReference type="GO" id="GO:0052170">
    <property type="term" value="P:symbiont-mediated suppression of host innate immune response"/>
    <property type="evidence" value="ECO:0007669"/>
    <property type="project" value="UniProtKB-KW"/>
</dbReference>
<keyword id="KW-0945">Host-virus interaction</keyword>
<keyword id="KW-1090">Inhibition of host innate immune response by virus</keyword>
<keyword id="KW-1185">Reference proteome</keyword>
<keyword id="KW-0899">Viral immunoevasion</keyword>
<accession>A0A088C4D9</accession>